<name>RLP34_ARATH</name>
<keyword id="KW-1003">Cell membrane</keyword>
<keyword id="KW-0325">Glycoprotein</keyword>
<keyword id="KW-0433">Leucine-rich repeat</keyword>
<keyword id="KW-0472">Membrane</keyword>
<keyword id="KW-0675">Receptor</keyword>
<keyword id="KW-1185">Reference proteome</keyword>
<keyword id="KW-0677">Repeat</keyword>
<keyword id="KW-0732">Signal</keyword>
<keyword id="KW-0812">Transmembrane</keyword>
<keyword id="KW-1133">Transmembrane helix</keyword>
<comment type="subcellular location">
    <subcellularLocation>
        <location evidence="4">Cell membrane</location>
        <topology evidence="4">Single-pass type I membrane protein</topology>
    </subcellularLocation>
</comment>
<comment type="similarity">
    <text evidence="4">Belongs to the RLP family.</text>
</comment>
<comment type="sequence caution" evidence="4">
    <conflict type="erroneous initiation">
        <sequence resource="EMBL-CDS" id="BAC42094"/>
    </conflict>
    <text>Truncated N-terminus.</text>
</comment>
<sequence>MKGSWVVSTSIIRITLSFTFLFICHFSDVLAAPTRHLCRPEQKDALLKFKNEFEIGKPSPTCKMVGIESHRKTESWGNNSDCCNWEGVTCNAKSGEVIELNLSCSSLHGRFHSNSSIRNLHFLTTLDRSHNDFEGQITSSIENLSHLTSLDLSYNRFSGQILNSIGNLSRLTSLDLSFNQFSGQIPSSIGNLSHLTFLGLSGNRFFGQIPSSIGNLSHLTFLGLSGNRFFGQFPSSIGGLSNLTNLHLSYNKYSGQIPSSIGNLSQLIVLYLSVNNFYGEIPSSFGNLNQLTRLDVSFNKLGGNFPNVLLNLTGLSVVSLSNNKFTGTLPPNITSLSNLMAFYASDNAFTGTFPSFLFIIPSLTYLGLSGNQLKGTLEFGNISSPSNLQYLNIGSNNFIGPIPSSISKLINLQELGISHLNTQCRPVDFSIFSHLKSLDDLRLSYLTTTTIDLNDILPYFKTLRSLDLSGNLVSATNKSSVSSDPPSQSIQSLYLSGCGITDFPEILRTQHELGFLDVSNNKIKGQVPGWLWTLPNLFYLNLSNNTFIGFQRPTKPEPSMAYLLGSNNNFTGKIPSFICELRSLYTLDLSDNNFSGSIPRCMENLKSNLSELNLRQNNLSGGFPEHIFESLRSLDVGHNQLVGKLPRSLRFFSNLEVLNVESNRINDMFPFWLSSLQKLQVLVLRSNAFHGPINQALFPKLRIIDISHNHFNGSLPTEYFVEWSRMSSLGTYEDGSNVNYLGSGYYQDSMVLMNKGVESELVRILTIYTAVDFSGNKFEGEIPKSIGLLKELHVLNLSNNAFTGHIPSSIGNLTALESLDVSQNKLYGEIPQEIGNLSLLSYMNFSHNQLTGLVPGGQQFLTQRCSSFEGNLGLFGSSLEEVCRDIHTPASHQQFETPQTEEEDEDLISWIAAAIGFGPGIAFGLMFGYILVSYKPEWFMNPFGRNNRRRKRHTTTH</sequence>
<dbReference type="EMBL" id="AC009991">
    <property type="protein sequence ID" value="AAF01520.1"/>
    <property type="molecule type" value="Genomic_DNA"/>
</dbReference>
<dbReference type="EMBL" id="CP002686">
    <property type="protein sequence ID" value="ANM64036.1"/>
    <property type="molecule type" value="Genomic_DNA"/>
</dbReference>
<dbReference type="EMBL" id="AK117429">
    <property type="protein sequence ID" value="BAC42094.1"/>
    <property type="status" value="ALT_INIT"/>
    <property type="molecule type" value="mRNA"/>
</dbReference>
<dbReference type="RefSeq" id="NP_001326087.1">
    <property type="nucleotide sequence ID" value="NM_001337906.1"/>
</dbReference>
<dbReference type="SMR" id="Q9SRL2"/>
<dbReference type="FunCoup" id="Q9SRL2">
    <property type="interactions" value="105"/>
</dbReference>
<dbReference type="IntAct" id="Q9SRL2">
    <property type="interactions" value="3"/>
</dbReference>
<dbReference type="STRING" id="3702.Q9SRL2"/>
<dbReference type="GlyCosmos" id="Q9SRL2">
    <property type="glycosylation" value="24 sites, No reported glycans"/>
</dbReference>
<dbReference type="GlyGen" id="Q9SRL2">
    <property type="glycosylation" value="24 sites"/>
</dbReference>
<dbReference type="PaxDb" id="3702-AT3G11010.1"/>
<dbReference type="ProteomicsDB" id="228212"/>
<dbReference type="EnsemblPlants" id="AT3G11010.2">
    <property type="protein sequence ID" value="AT3G11010.2"/>
    <property type="gene ID" value="AT3G11010"/>
</dbReference>
<dbReference type="GeneID" id="820272"/>
<dbReference type="Gramene" id="AT3G11010.2">
    <property type="protein sequence ID" value="AT3G11010.2"/>
    <property type="gene ID" value="AT3G11010"/>
</dbReference>
<dbReference type="KEGG" id="ath:AT3G11010"/>
<dbReference type="Araport" id="AT3G11010"/>
<dbReference type="TAIR" id="AT3G11010">
    <property type="gene designation" value="RLP34"/>
</dbReference>
<dbReference type="eggNOG" id="KOG0619">
    <property type="taxonomic scope" value="Eukaryota"/>
</dbReference>
<dbReference type="InParanoid" id="Q9SRL2"/>
<dbReference type="PhylomeDB" id="Q9SRL2"/>
<dbReference type="PRO" id="PR:Q9SRL2"/>
<dbReference type="Proteomes" id="UP000006548">
    <property type="component" value="Chromosome 3"/>
</dbReference>
<dbReference type="ExpressionAtlas" id="Q9SRL2">
    <property type="expression patterns" value="baseline and differential"/>
</dbReference>
<dbReference type="GO" id="GO:0005886">
    <property type="term" value="C:plasma membrane"/>
    <property type="evidence" value="ECO:0007669"/>
    <property type="project" value="UniProtKB-SubCell"/>
</dbReference>
<dbReference type="FunFam" id="3.80.10.10:FF:000453">
    <property type="entry name" value="Leucine-rich receptor-like protein kinase family protein"/>
    <property type="match status" value="1"/>
</dbReference>
<dbReference type="FunFam" id="3.80.10.10:FF:000275">
    <property type="entry name" value="Leucine-rich repeat receptor-like protein kinase"/>
    <property type="match status" value="1"/>
</dbReference>
<dbReference type="FunFam" id="3.80.10.10:FF:000213">
    <property type="entry name" value="Tyrosine-sulfated glycopeptide receptor 1"/>
    <property type="match status" value="1"/>
</dbReference>
<dbReference type="Gene3D" id="3.80.10.10">
    <property type="entry name" value="Ribonuclease Inhibitor"/>
    <property type="match status" value="3"/>
</dbReference>
<dbReference type="InterPro" id="IPR001611">
    <property type="entry name" value="Leu-rich_rpt"/>
</dbReference>
<dbReference type="InterPro" id="IPR003591">
    <property type="entry name" value="Leu-rich_rpt_typical-subtyp"/>
</dbReference>
<dbReference type="InterPro" id="IPR032675">
    <property type="entry name" value="LRR_dom_sf"/>
</dbReference>
<dbReference type="InterPro" id="IPR013210">
    <property type="entry name" value="LRR_N_plant-typ"/>
</dbReference>
<dbReference type="InterPro" id="IPR055414">
    <property type="entry name" value="LRR_R13L4/SHOC2-like"/>
</dbReference>
<dbReference type="InterPro" id="IPR046956">
    <property type="entry name" value="RLP23-like"/>
</dbReference>
<dbReference type="PANTHER" id="PTHR48061:SF12">
    <property type="entry name" value="DISEASE RESISTANCE LIKE PROTEIN"/>
    <property type="match status" value="1"/>
</dbReference>
<dbReference type="PANTHER" id="PTHR48061">
    <property type="entry name" value="LEUCINE-RICH REPEAT RECEPTOR PROTEIN KINASE EMS1-LIKE-RELATED"/>
    <property type="match status" value="1"/>
</dbReference>
<dbReference type="Pfam" id="PF00560">
    <property type="entry name" value="LRR_1"/>
    <property type="match status" value="6"/>
</dbReference>
<dbReference type="Pfam" id="PF23598">
    <property type="entry name" value="LRR_14"/>
    <property type="match status" value="1"/>
</dbReference>
<dbReference type="Pfam" id="PF13855">
    <property type="entry name" value="LRR_8"/>
    <property type="match status" value="3"/>
</dbReference>
<dbReference type="Pfam" id="PF08263">
    <property type="entry name" value="LRRNT_2"/>
    <property type="match status" value="1"/>
</dbReference>
<dbReference type="SMART" id="SM00365">
    <property type="entry name" value="LRR_SD22"/>
    <property type="match status" value="8"/>
</dbReference>
<dbReference type="SMART" id="SM00369">
    <property type="entry name" value="LRR_TYP"/>
    <property type="match status" value="10"/>
</dbReference>
<dbReference type="SUPFAM" id="SSF52058">
    <property type="entry name" value="L domain-like"/>
    <property type="match status" value="3"/>
</dbReference>
<organism>
    <name type="scientific">Arabidopsis thaliana</name>
    <name type="common">Mouse-ear cress</name>
    <dbReference type="NCBI Taxonomy" id="3702"/>
    <lineage>
        <taxon>Eukaryota</taxon>
        <taxon>Viridiplantae</taxon>
        <taxon>Streptophyta</taxon>
        <taxon>Embryophyta</taxon>
        <taxon>Tracheophyta</taxon>
        <taxon>Spermatophyta</taxon>
        <taxon>Magnoliopsida</taxon>
        <taxon>eudicotyledons</taxon>
        <taxon>Gunneridae</taxon>
        <taxon>Pentapetalae</taxon>
        <taxon>rosids</taxon>
        <taxon>malvids</taxon>
        <taxon>Brassicales</taxon>
        <taxon>Brassicaceae</taxon>
        <taxon>Camelineae</taxon>
        <taxon>Arabidopsis</taxon>
    </lineage>
</organism>
<gene>
    <name evidence="3" type="primary">RLP34</name>
    <name evidence="5" type="ordered locus">At3g11010</name>
    <name evidence="6" type="ORF">F9F8.17</name>
</gene>
<accession>Q9SRL2</accession>
<accession>Q8GYR8</accession>
<protein>
    <recommendedName>
        <fullName evidence="3">Receptor-like protein 34</fullName>
        <shortName evidence="3">AtRLP34</shortName>
    </recommendedName>
</protein>
<feature type="signal peptide" evidence="1">
    <location>
        <begin position="1"/>
        <end position="31"/>
    </location>
</feature>
<feature type="chain" id="PRO_0000443961" description="Receptor-like protein 34">
    <location>
        <begin position="32"/>
        <end position="957"/>
    </location>
</feature>
<feature type="topological domain" description="Extracellular" evidence="1">
    <location>
        <begin position="32"/>
        <end position="910"/>
    </location>
</feature>
<feature type="transmembrane region" description="Helical" evidence="1">
    <location>
        <begin position="911"/>
        <end position="931"/>
    </location>
</feature>
<feature type="topological domain" description="Cytoplasmic" evidence="1">
    <location>
        <begin position="932"/>
        <end position="957"/>
    </location>
</feature>
<feature type="repeat" description="LRR 1" evidence="1">
    <location>
        <begin position="120"/>
        <end position="143"/>
    </location>
</feature>
<feature type="repeat" description="LRR 2" evidence="1">
    <location>
        <begin position="144"/>
        <end position="167"/>
    </location>
</feature>
<feature type="repeat" description="LRR 3" evidence="1">
    <location>
        <begin position="168"/>
        <end position="192"/>
    </location>
</feature>
<feature type="repeat" description="LRR 4" evidence="1">
    <location>
        <begin position="194"/>
        <end position="216"/>
    </location>
</feature>
<feature type="repeat" description="LRR 5" evidence="1">
    <location>
        <begin position="217"/>
        <end position="240"/>
    </location>
</feature>
<feature type="repeat" description="LRR 6" evidence="1">
    <location>
        <begin position="241"/>
        <end position="264"/>
    </location>
</feature>
<feature type="repeat" description="LRR 7" evidence="1">
    <location>
        <begin position="266"/>
        <end position="287"/>
    </location>
</feature>
<feature type="repeat" description="LRR 8" evidence="1">
    <location>
        <begin position="288"/>
        <end position="312"/>
    </location>
</feature>
<feature type="repeat" description="LRR 9" evidence="1">
    <location>
        <begin position="313"/>
        <end position="336"/>
    </location>
</feature>
<feature type="repeat" description="LRR 10" evidence="1">
    <location>
        <begin position="338"/>
        <end position="360"/>
    </location>
</feature>
<feature type="repeat" description="LRR 11" evidence="1">
    <location>
        <begin position="361"/>
        <end position="384"/>
    </location>
</feature>
<feature type="repeat" description="LRR 12" evidence="1">
    <location>
        <begin position="386"/>
        <end position="409"/>
    </location>
</feature>
<feature type="repeat" description="LRR 13" evidence="1">
    <location>
        <begin position="412"/>
        <end position="434"/>
    </location>
</feature>
<feature type="repeat" description="LRR 14" evidence="1">
    <location>
        <begin position="435"/>
        <end position="459"/>
    </location>
</feature>
<feature type="repeat" description="LRR 15" evidence="1">
    <location>
        <begin position="460"/>
        <end position="483"/>
    </location>
</feature>
<feature type="repeat" description="LRR 16" evidence="1">
    <location>
        <begin position="487"/>
        <end position="510"/>
    </location>
</feature>
<feature type="repeat" description="LRR 17" evidence="1">
    <location>
        <begin position="511"/>
        <end position="534"/>
    </location>
</feature>
<feature type="repeat" description="LRR 18" evidence="1">
    <location>
        <begin position="535"/>
        <end position="557"/>
    </location>
</feature>
<feature type="repeat" description="LRR 19; degenerate" evidence="4">
    <location>
        <begin position="558"/>
        <end position="580"/>
    </location>
</feature>
<feature type="repeat" description="LRR 20" evidence="1">
    <location>
        <begin position="581"/>
        <end position="605"/>
    </location>
</feature>
<feature type="repeat" description="LRR 21" evidence="1">
    <location>
        <begin position="606"/>
        <end position="630"/>
    </location>
</feature>
<feature type="repeat" description="LRR 22" evidence="1">
    <location>
        <begin position="632"/>
        <end position="652"/>
    </location>
</feature>
<feature type="repeat" description="LRR 23" evidence="1">
    <location>
        <begin position="653"/>
        <end position="675"/>
    </location>
</feature>
<feature type="repeat" description="LRR 24" evidence="1">
    <location>
        <begin position="677"/>
        <end position="698"/>
    </location>
</feature>
<feature type="repeat" description="LRR 25" evidence="1">
    <location>
        <begin position="699"/>
        <end position="722"/>
    </location>
</feature>
<feature type="repeat" description="LRR 26" evidence="1">
    <location>
        <begin position="765"/>
        <end position="789"/>
    </location>
</feature>
<feature type="repeat" description="LRR 27" evidence="1">
    <location>
        <begin position="790"/>
        <end position="813"/>
    </location>
</feature>
<feature type="repeat" description="LRR 28" evidence="1">
    <location>
        <begin position="815"/>
        <end position="837"/>
    </location>
</feature>
<feature type="repeat" description="LRR 29" evidence="1">
    <location>
        <begin position="839"/>
        <end position="862"/>
    </location>
</feature>
<feature type="glycosylation site" description="N-linked (GlcNAc...) asparagine" evidence="2">
    <location>
        <position position="78"/>
    </location>
</feature>
<feature type="glycosylation site" description="N-linked (GlcNAc...) asparagine" evidence="2">
    <location>
        <position position="101"/>
    </location>
</feature>
<feature type="glycosylation site" description="N-linked (GlcNAc...) asparagine" evidence="2">
    <location>
        <position position="114"/>
    </location>
</feature>
<feature type="glycosylation site" description="N-linked (GlcNAc...) asparagine" evidence="2">
    <location>
        <position position="143"/>
    </location>
</feature>
<feature type="glycosylation site" description="N-linked (GlcNAc...) asparagine" evidence="2">
    <location>
        <position position="167"/>
    </location>
</feature>
<feature type="glycosylation site" description="N-linked (GlcNAc...) asparagine" evidence="2">
    <location>
        <position position="191"/>
    </location>
</feature>
<feature type="glycosylation site" description="N-linked (GlcNAc...) asparagine" evidence="2">
    <location>
        <position position="215"/>
    </location>
</feature>
<feature type="glycosylation site" description="N-linked (GlcNAc...) asparagine" evidence="2">
    <location>
        <position position="242"/>
    </location>
</feature>
<feature type="glycosylation site" description="N-linked (GlcNAc...) asparagine" evidence="2">
    <location>
        <position position="263"/>
    </location>
</feature>
<feature type="glycosylation site" description="N-linked (GlcNAc...) asparagine" evidence="2">
    <location>
        <position position="311"/>
    </location>
</feature>
<feature type="glycosylation site" description="N-linked (GlcNAc...) asparagine" evidence="2">
    <location>
        <position position="332"/>
    </location>
</feature>
<feature type="glycosylation site" description="N-linked (GlcNAc...) asparagine" evidence="2">
    <location>
        <position position="381"/>
    </location>
</feature>
<feature type="glycosylation site" description="N-linked (GlcNAc...) asparagine" evidence="2">
    <location>
        <position position="477"/>
    </location>
</feature>
<feature type="glycosylation site" description="N-linked (GlcNAc...) asparagine" evidence="2">
    <location>
        <position position="541"/>
    </location>
</feature>
<feature type="glycosylation site" description="N-linked (GlcNAc...) asparagine" evidence="2">
    <location>
        <position position="544"/>
    </location>
</feature>
<feature type="glycosylation site" description="N-linked (GlcNAc...) asparagine" evidence="2">
    <location>
        <position position="569"/>
    </location>
</feature>
<feature type="glycosylation site" description="N-linked (GlcNAc...) asparagine" evidence="2">
    <location>
        <position position="593"/>
    </location>
</feature>
<feature type="glycosylation site" description="N-linked (GlcNAc...) asparagine" evidence="2">
    <location>
        <position position="608"/>
    </location>
</feature>
<feature type="glycosylation site" description="N-linked (GlcNAc...) asparagine" evidence="2">
    <location>
        <position position="618"/>
    </location>
</feature>
<feature type="glycosylation site" description="N-linked (GlcNAc...) asparagine" evidence="2">
    <location>
        <position position="712"/>
    </location>
</feature>
<feature type="glycosylation site" description="N-linked (GlcNAc...) asparagine" evidence="2">
    <location>
        <position position="796"/>
    </location>
</feature>
<feature type="glycosylation site" description="N-linked (GlcNAc...) asparagine" evidence="2">
    <location>
        <position position="812"/>
    </location>
</feature>
<feature type="glycosylation site" description="N-linked (GlcNAc...) asparagine" evidence="2">
    <location>
        <position position="836"/>
    </location>
</feature>
<feature type="glycosylation site" description="N-linked (GlcNAc...) asparagine" evidence="2">
    <location>
        <position position="844"/>
    </location>
</feature>
<feature type="sequence conflict" description="In Ref. 3; BAC42094." evidence="4" ref="3">
    <original>G</original>
    <variation>D</variation>
    <location>
        <position position="190"/>
    </location>
</feature>
<feature type="sequence conflict" description="In Ref. 3; BAC42094." evidence="4" ref="3">
    <original>A</original>
    <variation>T</variation>
    <location>
        <position position="801"/>
    </location>
</feature>
<evidence type="ECO:0000255" key="1"/>
<evidence type="ECO:0000255" key="2">
    <source>
        <dbReference type="PROSITE-ProRule" id="PRU00498"/>
    </source>
</evidence>
<evidence type="ECO:0000303" key="3">
    <source>
    </source>
</evidence>
<evidence type="ECO:0000305" key="4"/>
<evidence type="ECO:0000312" key="5">
    <source>
        <dbReference type="Araport" id="AT3G11010"/>
    </source>
</evidence>
<evidence type="ECO:0000312" key="6">
    <source>
        <dbReference type="EMBL" id="AAF01520.1"/>
    </source>
</evidence>
<reference key="1">
    <citation type="journal article" date="2000" name="Nature">
        <title>Sequence and analysis of chromosome 3 of the plant Arabidopsis thaliana.</title>
        <authorList>
            <person name="Salanoubat M."/>
            <person name="Lemcke K."/>
            <person name="Rieger M."/>
            <person name="Ansorge W."/>
            <person name="Unseld M."/>
            <person name="Fartmann B."/>
            <person name="Valle G."/>
            <person name="Bloecker H."/>
            <person name="Perez-Alonso M."/>
            <person name="Obermaier B."/>
            <person name="Delseny M."/>
            <person name="Boutry M."/>
            <person name="Grivell L.A."/>
            <person name="Mache R."/>
            <person name="Puigdomenech P."/>
            <person name="De Simone V."/>
            <person name="Choisne N."/>
            <person name="Artiguenave F."/>
            <person name="Robert C."/>
            <person name="Brottier P."/>
            <person name="Wincker P."/>
            <person name="Cattolico L."/>
            <person name="Weissenbach J."/>
            <person name="Saurin W."/>
            <person name="Quetier F."/>
            <person name="Schaefer M."/>
            <person name="Mueller-Auer S."/>
            <person name="Gabel C."/>
            <person name="Fuchs M."/>
            <person name="Benes V."/>
            <person name="Wurmbach E."/>
            <person name="Drzonek H."/>
            <person name="Erfle H."/>
            <person name="Jordan N."/>
            <person name="Bangert S."/>
            <person name="Wiedelmann R."/>
            <person name="Kranz H."/>
            <person name="Voss H."/>
            <person name="Holland R."/>
            <person name="Brandt P."/>
            <person name="Nyakatura G."/>
            <person name="Vezzi A."/>
            <person name="D'Angelo M."/>
            <person name="Pallavicini A."/>
            <person name="Toppo S."/>
            <person name="Simionati B."/>
            <person name="Conrad A."/>
            <person name="Hornischer K."/>
            <person name="Kauer G."/>
            <person name="Loehnert T.-H."/>
            <person name="Nordsiek G."/>
            <person name="Reichelt J."/>
            <person name="Scharfe M."/>
            <person name="Schoen O."/>
            <person name="Bargues M."/>
            <person name="Terol J."/>
            <person name="Climent J."/>
            <person name="Navarro P."/>
            <person name="Collado C."/>
            <person name="Perez-Perez A."/>
            <person name="Ottenwaelder B."/>
            <person name="Duchemin D."/>
            <person name="Cooke R."/>
            <person name="Laudie M."/>
            <person name="Berger-Llauro C."/>
            <person name="Purnelle B."/>
            <person name="Masuy D."/>
            <person name="de Haan M."/>
            <person name="Maarse A.C."/>
            <person name="Alcaraz J.-P."/>
            <person name="Cottet A."/>
            <person name="Casacuberta E."/>
            <person name="Monfort A."/>
            <person name="Argiriou A."/>
            <person name="Flores M."/>
            <person name="Liguori R."/>
            <person name="Vitale D."/>
            <person name="Mannhaupt G."/>
            <person name="Haase D."/>
            <person name="Schoof H."/>
            <person name="Rudd S."/>
            <person name="Zaccaria P."/>
            <person name="Mewes H.-W."/>
            <person name="Mayer K.F.X."/>
            <person name="Kaul S."/>
            <person name="Town C.D."/>
            <person name="Koo H.L."/>
            <person name="Tallon L.J."/>
            <person name="Jenkins J."/>
            <person name="Rooney T."/>
            <person name="Rizzo M."/>
            <person name="Walts A."/>
            <person name="Utterback T."/>
            <person name="Fujii C.Y."/>
            <person name="Shea T.P."/>
            <person name="Creasy T.H."/>
            <person name="Haas B."/>
            <person name="Maiti R."/>
            <person name="Wu D."/>
            <person name="Peterson J."/>
            <person name="Van Aken S."/>
            <person name="Pai G."/>
            <person name="Militscher J."/>
            <person name="Sellers P."/>
            <person name="Gill J.E."/>
            <person name="Feldblyum T.V."/>
            <person name="Preuss D."/>
            <person name="Lin X."/>
            <person name="Nierman W.C."/>
            <person name="Salzberg S.L."/>
            <person name="White O."/>
            <person name="Venter J.C."/>
            <person name="Fraser C.M."/>
            <person name="Kaneko T."/>
            <person name="Nakamura Y."/>
            <person name="Sato S."/>
            <person name="Kato T."/>
            <person name="Asamizu E."/>
            <person name="Sasamoto S."/>
            <person name="Kimura T."/>
            <person name="Idesawa K."/>
            <person name="Kawashima K."/>
            <person name="Kishida Y."/>
            <person name="Kiyokawa C."/>
            <person name="Kohara M."/>
            <person name="Matsumoto M."/>
            <person name="Matsuno A."/>
            <person name="Muraki A."/>
            <person name="Nakayama S."/>
            <person name="Nakazaki N."/>
            <person name="Shinpo S."/>
            <person name="Takeuchi C."/>
            <person name="Wada T."/>
            <person name="Watanabe A."/>
            <person name="Yamada M."/>
            <person name="Yasuda M."/>
            <person name="Tabata S."/>
        </authorList>
    </citation>
    <scope>NUCLEOTIDE SEQUENCE [LARGE SCALE GENOMIC DNA]</scope>
    <source>
        <strain>cv. Columbia</strain>
    </source>
</reference>
<reference key="2">
    <citation type="journal article" date="2017" name="Plant J.">
        <title>Araport11: a complete reannotation of the Arabidopsis thaliana reference genome.</title>
        <authorList>
            <person name="Cheng C.Y."/>
            <person name="Krishnakumar V."/>
            <person name="Chan A.P."/>
            <person name="Thibaud-Nissen F."/>
            <person name="Schobel S."/>
            <person name="Town C.D."/>
        </authorList>
    </citation>
    <scope>GENOME REANNOTATION</scope>
    <source>
        <strain>cv. Columbia</strain>
    </source>
</reference>
<reference key="3">
    <citation type="journal article" date="2002" name="Science">
        <title>Functional annotation of a full-length Arabidopsis cDNA collection.</title>
        <authorList>
            <person name="Seki M."/>
            <person name="Narusaka M."/>
            <person name="Kamiya A."/>
            <person name="Ishida J."/>
            <person name="Satou M."/>
            <person name="Sakurai T."/>
            <person name="Nakajima M."/>
            <person name="Enju A."/>
            <person name="Akiyama K."/>
            <person name="Oono Y."/>
            <person name="Muramatsu M."/>
            <person name="Hayashizaki Y."/>
            <person name="Kawai J."/>
            <person name="Carninci P."/>
            <person name="Itoh M."/>
            <person name="Ishii Y."/>
            <person name="Arakawa T."/>
            <person name="Shibata K."/>
            <person name="Shinagawa A."/>
            <person name="Shinozaki K."/>
        </authorList>
    </citation>
    <scope>NUCLEOTIDE SEQUENCE [LARGE SCALE MRNA] OF 61-957</scope>
    <source>
        <strain>cv. Columbia</strain>
    </source>
</reference>
<reference key="4">
    <citation type="journal article" date="2005" name="Plant Physiol.">
        <title>Phylogenomic analysis of the receptor-like proteins of rice and Arabidopsis.</title>
        <authorList>
            <person name="Fritz-Laylin L.K."/>
            <person name="Krishnamurthy N."/>
            <person name="Toer M."/>
            <person name="Sjoelander K.V."/>
            <person name="Jones J.D."/>
        </authorList>
    </citation>
    <scope>GENE FAMILY</scope>
</reference>
<reference key="5">
    <citation type="journal article" date="2008" name="Plant Physiol.">
        <title>A genome-wide functional investigation into the roles of receptor-like proteins in Arabidopsis.</title>
        <authorList>
            <person name="Wang G."/>
            <person name="Ellendorff U."/>
            <person name="Kemp B."/>
            <person name="Mansfield J.W."/>
            <person name="Forsyth A."/>
            <person name="Mitchell K."/>
            <person name="Bastas K."/>
            <person name="Liu C.-M."/>
            <person name="Woods-Toer A."/>
            <person name="Zipfel C."/>
            <person name="de Wit P.J.G.M."/>
            <person name="Jones J.D.G."/>
            <person name="Toer M."/>
            <person name="Thomma B.P.H.J."/>
        </authorList>
    </citation>
    <scope>GENE FAMILY</scope>
    <scope>NOMENCLATURE</scope>
    <source>
        <strain>cv. Columbia</strain>
    </source>
</reference>
<proteinExistence type="evidence at transcript level"/>